<dbReference type="EMBL" id="FM209186">
    <property type="protein sequence ID" value="CAW29109.1"/>
    <property type="molecule type" value="Genomic_DNA"/>
</dbReference>
<dbReference type="RefSeq" id="WP_003086099.1">
    <property type="nucleotide sequence ID" value="NC_011770.1"/>
</dbReference>
<dbReference type="SMR" id="B7UXX2"/>
<dbReference type="KEGG" id="pag:PLES_43541"/>
<dbReference type="HOGENOM" id="CLU_180796_4_1_6"/>
<dbReference type="Gene3D" id="1.20.5.300">
    <property type="match status" value="1"/>
</dbReference>
<dbReference type="HAMAP" id="MF_00715">
    <property type="entry name" value="SlyX"/>
    <property type="match status" value="1"/>
</dbReference>
<dbReference type="InterPro" id="IPR007236">
    <property type="entry name" value="SlyX"/>
</dbReference>
<dbReference type="NCBIfam" id="NF001421">
    <property type="entry name" value="PRK00295.1"/>
    <property type="match status" value="1"/>
</dbReference>
<dbReference type="PANTHER" id="PTHR36508">
    <property type="entry name" value="PROTEIN SLYX"/>
    <property type="match status" value="1"/>
</dbReference>
<dbReference type="PANTHER" id="PTHR36508:SF1">
    <property type="entry name" value="PROTEIN SLYX"/>
    <property type="match status" value="1"/>
</dbReference>
<dbReference type="Pfam" id="PF04102">
    <property type="entry name" value="SlyX"/>
    <property type="match status" value="1"/>
</dbReference>
<accession>B7UXX2</accession>
<protein>
    <recommendedName>
        <fullName evidence="1">Protein SlyX homolog</fullName>
    </recommendedName>
</protein>
<evidence type="ECO:0000255" key="1">
    <source>
        <dbReference type="HAMAP-Rule" id="MF_00715"/>
    </source>
</evidence>
<gene>
    <name evidence="1" type="primary">slyX</name>
    <name type="ordered locus">PLES_43541</name>
</gene>
<organism>
    <name type="scientific">Pseudomonas aeruginosa (strain LESB58)</name>
    <dbReference type="NCBI Taxonomy" id="557722"/>
    <lineage>
        <taxon>Bacteria</taxon>
        <taxon>Pseudomonadati</taxon>
        <taxon>Pseudomonadota</taxon>
        <taxon>Gammaproteobacteria</taxon>
        <taxon>Pseudomonadales</taxon>
        <taxon>Pseudomonadaceae</taxon>
        <taxon>Pseudomonas</taxon>
    </lineage>
</organism>
<proteinExistence type="inferred from homology"/>
<feature type="chain" id="PRO_1000195844" description="Protein SlyX homolog">
    <location>
        <begin position="1"/>
        <end position="69"/>
    </location>
</feature>
<name>SLYX_PSEA8</name>
<comment type="similarity">
    <text evidence="1">Belongs to the SlyX family.</text>
</comment>
<reference key="1">
    <citation type="journal article" date="2009" name="Genome Res.">
        <title>Newly introduced genomic prophage islands are critical determinants of in vivo competitiveness in the Liverpool epidemic strain of Pseudomonas aeruginosa.</title>
        <authorList>
            <person name="Winstanley C."/>
            <person name="Langille M.G.I."/>
            <person name="Fothergill J.L."/>
            <person name="Kukavica-Ibrulj I."/>
            <person name="Paradis-Bleau C."/>
            <person name="Sanschagrin F."/>
            <person name="Thomson N.R."/>
            <person name="Winsor G.L."/>
            <person name="Quail M.A."/>
            <person name="Lennard N."/>
            <person name="Bignell A."/>
            <person name="Clarke L."/>
            <person name="Seeger K."/>
            <person name="Saunders D."/>
            <person name="Harris D."/>
            <person name="Parkhill J."/>
            <person name="Hancock R.E.W."/>
            <person name="Brinkman F.S.L."/>
            <person name="Levesque R.C."/>
        </authorList>
    </citation>
    <scope>NUCLEOTIDE SEQUENCE [LARGE SCALE GENOMIC DNA]</scope>
    <source>
        <strain>LESB58</strain>
    </source>
</reference>
<sequence>MELDARMDDLECRQAFQDDTLQALNDVVVEQQRSIERLQLQVAALIKRLEDVQGLVGEAGEDEAPPPHY</sequence>